<dbReference type="EC" id="1.1.1.290" evidence="1"/>
<dbReference type="EMBL" id="CR378671">
    <property type="protein sequence ID" value="CAG21034.1"/>
    <property type="molecule type" value="Genomic_DNA"/>
</dbReference>
<dbReference type="RefSeq" id="WP_011219313.1">
    <property type="nucleotide sequence ID" value="NC_006370.1"/>
</dbReference>
<dbReference type="SMR" id="Q6LNU2"/>
<dbReference type="STRING" id="298386.PBPRA2656"/>
<dbReference type="KEGG" id="ppr:PBPRA2656"/>
<dbReference type="eggNOG" id="COG0111">
    <property type="taxonomic scope" value="Bacteria"/>
</dbReference>
<dbReference type="HOGENOM" id="CLU_019796_4_0_6"/>
<dbReference type="UniPathway" id="UPA00244">
    <property type="reaction ID" value="UER00310"/>
</dbReference>
<dbReference type="Proteomes" id="UP000000593">
    <property type="component" value="Chromosome 1"/>
</dbReference>
<dbReference type="GO" id="GO:0005829">
    <property type="term" value="C:cytosol"/>
    <property type="evidence" value="ECO:0007669"/>
    <property type="project" value="TreeGrafter"/>
</dbReference>
<dbReference type="GO" id="GO:0033711">
    <property type="term" value="F:4-phosphoerythronate dehydrogenase activity"/>
    <property type="evidence" value="ECO:0007669"/>
    <property type="project" value="UniProtKB-EC"/>
</dbReference>
<dbReference type="GO" id="GO:0030267">
    <property type="term" value="F:glyoxylate reductase (NADPH) activity"/>
    <property type="evidence" value="ECO:0007669"/>
    <property type="project" value="TreeGrafter"/>
</dbReference>
<dbReference type="GO" id="GO:0016618">
    <property type="term" value="F:hydroxypyruvate reductase [NAD(P)H] activity"/>
    <property type="evidence" value="ECO:0007669"/>
    <property type="project" value="TreeGrafter"/>
</dbReference>
<dbReference type="GO" id="GO:0051287">
    <property type="term" value="F:NAD binding"/>
    <property type="evidence" value="ECO:0007669"/>
    <property type="project" value="InterPro"/>
</dbReference>
<dbReference type="GO" id="GO:0046983">
    <property type="term" value="F:protein dimerization activity"/>
    <property type="evidence" value="ECO:0007669"/>
    <property type="project" value="InterPro"/>
</dbReference>
<dbReference type="GO" id="GO:0008615">
    <property type="term" value="P:pyridoxine biosynthetic process"/>
    <property type="evidence" value="ECO:0007669"/>
    <property type="project" value="UniProtKB-UniRule"/>
</dbReference>
<dbReference type="CDD" id="cd12158">
    <property type="entry name" value="ErythrP_dh"/>
    <property type="match status" value="1"/>
</dbReference>
<dbReference type="Gene3D" id="3.30.1370.170">
    <property type="match status" value="1"/>
</dbReference>
<dbReference type="Gene3D" id="3.40.50.720">
    <property type="entry name" value="NAD(P)-binding Rossmann-like Domain"/>
    <property type="match status" value="2"/>
</dbReference>
<dbReference type="HAMAP" id="MF_01825">
    <property type="entry name" value="PdxB"/>
    <property type="match status" value="1"/>
</dbReference>
<dbReference type="InterPro" id="IPR050223">
    <property type="entry name" value="D-isomer_2-hydroxyacid_DH"/>
</dbReference>
<dbReference type="InterPro" id="IPR006139">
    <property type="entry name" value="D-isomer_2_OHA_DH_cat_dom"/>
</dbReference>
<dbReference type="InterPro" id="IPR029753">
    <property type="entry name" value="D-isomer_DH_CS"/>
</dbReference>
<dbReference type="InterPro" id="IPR006140">
    <property type="entry name" value="D-isomer_DH_NAD-bd"/>
</dbReference>
<dbReference type="InterPro" id="IPR020921">
    <property type="entry name" value="Erythronate-4-P_DHase"/>
</dbReference>
<dbReference type="InterPro" id="IPR024531">
    <property type="entry name" value="Erythronate-4-P_DHase_dimer"/>
</dbReference>
<dbReference type="InterPro" id="IPR036291">
    <property type="entry name" value="NAD(P)-bd_dom_sf"/>
</dbReference>
<dbReference type="InterPro" id="IPR038251">
    <property type="entry name" value="PdxB_dimer_sf"/>
</dbReference>
<dbReference type="PANTHER" id="PTHR10996:SF178">
    <property type="entry name" value="2-HYDROXYACID DEHYDROGENASE YGL185C-RELATED"/>
    <property type="match status" value="1"/>
</dbReference>
<dbReference type="PANTHER" id="PTHR10996">
    <property type="entry name" value="2-HYDROXYACID DEHYDROGENASE-RELATED"/>
    <property type="match status" value="1"/>
</dbReference>
<dbReference type="Pfam" id="PF00389">
    <property type="entry name" value="2-Hacid_dh"/>
    <property type="match status" value="1"/>
</dbReference>
<dbReference type="Pfam" id="PF02826">
    <property type="entry name" value="2-Hacid_dh_C"/>
    <property type="match status" value="1"/>
</dbReference>
<dbReference type="Pfam" id="PF11890">
    <property type="entry name" value="DUF3410"/>
    <property type="match status" value="1"/>
</dbReference>
<dbReference type="SUPFAM" id="SSF52283">
    <property type="entry name" value="Formate/glycerate dehydrogenase catalytic domain-like"/>
    <property type="match status" value="1"/>
</dbReference>
<dbReference type="SUPFAM" id="SSF51735">
    <property type="entry name" value="NAD(P)-binding Rossmann-fold domains"/>
    <property type="match status" value="1"/>
</dbReference>
<dbReference type="PROSITE" id="PS00671">
    <property type="entry name" value="D_2_HYDROXYACID_DH_3"/>
    <property type="match status" value="1"/>
</dbReference>
<gene>
    <name evidence="1" type="primary">pdxB</name>
    <name type="ordered locus">PBPRA2656</name>
</gene>
<comment type="function">
    <text evidence="1">Catalyzes the oxidation of erythronate-4-phosphate to 3-hydroxy-2-oxo-4-phosphonooxybutanoate.</text>
</comment>
<comment type="catalytic activity">
    <reaction evidence="1">
        <text>4-phospho-D-erythronate + NAD(+) = (R)-3-hydroxy-2-oxo-4-phosphooxybutanoate + NADH + H(+)</text>
        <dbReference type="Rhea" id="RHEA:18829"/>
        <dbReference type="ChEBI" id="CHEBI:15378"/>
        <dbReference type="ChEBI" id="CHEBI:57540"/>
        <dbReference type="ChEBI" id="CHEBI:57945"/>
        <dbReference type="ChEBI" id="CHEBI:58538"/>
        <dbReference type="ChEBI" id="CHEBI:58766"/>
        <dbReference type="EC" id="1.1.1.290"/>
    </reaction>
</comment>
<comment type="pathway">
    <text evidence="1">Cofactor biosynthesis; pyridoxine 5'-phosphate biosynthesis; pyridoxine 5'-phosphate from D-erythrose 4-phosphate: step 2/5.</text>
</comment>
<comment type="subunit">
    <text evidence="1">Homodimer.</text>
</comment>
<comment type="subcellular location">
    <subcellularLocation>
        <location evidence="1">Cytoplasm</location>
    </subcellularLocation>
</comment>
<comment type="similarity">
    <text evidence="1">Belongs to the D-isomer specific 2-hydroxyacid dehydrogenase family. PdxB subfamily.</text>
</comment>
<feature type="chain" id="PRO_0000075980" description="Erythronate-4-phosphate dehydrogenase">
    <location>
        <begin position="1"/>
        <end position="391"/>
    </location>
</feature>
<feature type="active site" evidence="1">
    <location>
        <position position="209"/>
    </location>
</feature>
<feature type="active site" evidence="1">
    <location>
        <position position="243"/>
    </location>
</feature>
<feature type="active site" description="Proton donor" evidence="1">
    <location>
        <position position="260"/>
    </location>
</feature>
<feature type="binding site" evidence="1">
    <location>
        <position position="45"/>
    </location>
    <ligand>
        <name>substrate</name>
    </ligand>
</feature>
<feature type="binding site" evidence="1">
    <location>
        <position position="67"/>
    </location>
    <ligand>
        <name>substrate</name>
    </ligand>
</feature>
<feature type="binding site" evidence="1">
    <location>
        <position position="147"/>
    </location>
    <ligand>
        <name>NAD(+)</name>
        <dbReference type="ChEBI" id="CHEBI:57540"/>
    </ligand>
</feature>
<feature type="binding site" evidence="1">
    <location>
        <position position="176"/>
    </location>
    <ligand>
        <name>NAD(+)</name>
        <dbReference type="ChEBI" id="CHEBI:57540"/>
    </ligand>
</feature>
<feature type="binding site" evidence="1">
    <location>
        <position position="238"/>
    </location>
    <ligand>
        <name>NAD(+)</name>
        <dbReference type="ChEBI" id="CHEBI:57540"/>
    </ligand>
</feature>
<feature type="binding site" evidence="1">
    <location>
        <position position="263"/>
    </location>
    <ligand>
        <name>NAD(+)</name>
        <dbReference type="ChEBI" id="CHEBI:57540"/>
    </ligand>
</feature>
<feature type="binding site" evidence="1">
    <location>
        <position position="264"/>
    </location>
    <ligand>
        <name>substrate</name>
    </ligand>
</feature>
<keyword id="KW-0963">Cytoplasm</keyword>
<keyword id="KW-0520">NAD</keyword>
<keyword id="KW-0560">Oxidoreductase</keyword>
<keyword id="KW-0664">Pyridoxine biosynthesis</keyword>
<keyword id="KW-1185">Reference proteome</keyword>
<evidence type="ECO:0000255" key="1">
    <source>
        <dbReference type="HAMAP-Rule" id="MF_01825"/>
    </source>
</evidence>
<organism>
    <name type="scientific">Photobacterium profundum (strain SS9)</name>
    <dbReference type="NCBI Taxonomy" id="298386"/>
    <lineage>
        <taxon>Bacteria</taxon>
        <taxon>Pseudomonadati</taxon>
        <taxon>Pseudomonadota</taxon>
        <taxon>Gammaproteobacteria</taxon>
        <taxon>Vibrionales</taxon>
        <taxon>Vibrionaceae</taxon>
        <taxon>Photobacterium</taxon>
    </lineage>
</organism>
<sequence length="391" mass="42695">MKILIDENMPYAAELFGQLGEVVTKPGRTLSADDLIDIDALMIRSVTKVNHNLISKANKLQFVGTATAGQDHVDQALLAERGITFTSAPGCNKVGVAEYVLSALMVIGQQQGFSIFDKTIGIIGAGNVGSYLAQCLDALGIPYLLNDPIKEQEGDTRQFHSLEAIKAQCDVITVHTPITKDGEYPTHHLINEAFIDALQPDAILINAARGPVTDNQALKKALQLSQSGLGKKLTAVLDVFEFEPHVDLELLPLLAFATPHIAGYGLEGKARGTTMVFNRYCAFLNIDQAVEASSLLPIAPVPNVSLSRKWDDATLFSLIQLIYDIRKDDALFRRNMVVTKGNEAQMATAFDQMRKNYWDRREYSAITVTGKVGFGVESLAKLGFTVVEDIQ</sequence>
<protein>
    <recommendedName>
        <fullName evidence="1">Erythronate-4-phosphate dehydrogenase</fullName>
        <ecNumber evidence="1">1.1.1.290</ecNumber>
    </recommendedName>
</protein>
<name>PDXB_PHOPR</name>
<reference key="1">
    <citation type="journal article" date="2005" name="Science">
        <title>Life at depth: Photobacterium profundum genome sequence and expression analysis.</title>
        <authorList>
            <person name="Vezzi A."/>
            <person name="Campanaro S."/>
            <person name="D'Angelo M."/>
            <person name="Simonato F."/>
            <person name="Vitulo N."/>
            <person name="Lauro F.M."/>
            <person name="Cestaro A."/>
            <person name="Malacrida G."/>
            <person name="Simionati B."/>
            <person name="Cannata N."/>
            <person name="Romualdi C."/>
            <person name="Bartlett D.H."/>
            <person name="Valle G."/>
        </authorList>
    </citation>
    <scope>NUCLEOTIDE SEQUENCE [LARGE SCALE GENOMIC DNA]</scope>
    <source>
        <strain>ATCC BAA-1253 / SS9</strain>
    </source>
</reference>
<accession>Q6LNU2</accession>
<proteinExistence type="inferred from homology"/>